<reference key="1">
    <citation type="journal article" date="2004" name="Proc. Natl. Acad. Sci. U.S.A.">
        <title>Genome sequence of the deep-sea gamma-proteobacterium Idiomarina loihiensis reveals amino acid fermentation as a source of carbon and energy.</title>
        <authorList>
            <person name="Hou S."/>
            <person name="Saw J.H."/>
            <person name="Lee K.S."/>
            <person name="Freitas T.A."/>
            <person name="Belisle C."/>
            <person name="Kawarabayasi Y."/>
            <person name="Donachie S.P."/>
            <person name="Pikina A."/>
            <person name="Galperin M.Y."/>
            <person name="Koonin E.V."/>
            <person name="Makarova K.S."/>
            <person name="Omelchenko M.V."/>
            <person name="Sorokin A."/>
            <person name="Wolf Y.I."/>
            <person name="Li Q.X."/>
            <person name="Keum Y.S."/>
            <person name="Campbell S."/>
            <person name="Denery J."/>
            <person name="Aizawa S."/>
            <person name="Shibata S."/>
            <person name="Malahoff A."/>
            <person name="Alam M."/>
        </authorList>
    </citation>
    <scope>NUCLEOTIDE SEQUENCE [LARGE SCALE GENOMIC DNA]</scope>
    <source>
        <strain>ATCC BAA-735 / DSM 15497 / L2-TR</strain>
    </source>
</reference>
<dbReference type="EC" id="2.1.1.172" evidence="1"/>
<dbReference type="EMBL" id="AE017340">
    <property type="protein sequence ID" value="AAV81336.1"/>
    <property type="molecule type" value="Genomic_DNA"/>
</dbReference>
<dbReference type="RefSeq" id="WP_011233754.1">
    <property type="nucleotide sequence ID" value="NC_006512.1"/>
</dbReference>
<dbReference type="SMR" id="Q5R049"/>
<dbReference type="STRING" id="283942.IL0493"/>
<dbReference type="GeneID" id="41335644"/>
<dbReference type="KEGG" id="ilo:IL0493"/>
<dbReference type="eggNOG" id="COG2813">
    <property type="taxonomic scope" value="Bacteria"/>
</dbReference>
<dbReference type="HOGENOM" id="CLU_049581_0_0_6"/>
<dbReference type="OrthoDB" id="9816072at2"/>
<dbReference type="Proteomes" id="UP000001171">
    <property type="component" value="Chromosome"/>
</dbReference>
<dbReference type="GO" id="GO:0005737">
    <property type="term" value="C:cytoplasm"/>
    <property type="evidence" value="ECO:0007669"/>
    <property type="project" value="UniProtKB-SubCell"/>
</dbReference>
<dbReference type="GO" id="GO:0052914">
    <property type="term" value="F:16S rRNA (guanine(1207)-N(2))-methyltransferase activity"/>
    <property type="evidence" value="ECO:0007669"/>
    <property type="project" value="UniProtKB-EC"/>
</dbReference>
<dbReference type="GO" id="GO:0003676">
    <property type="term" value="F:nucleic acid binding"/>
    <property type="evidence" value="ECO:0007669"/>
    <property type="project" value="InterPro"/>
</dbReference>
<dbReference type="CDD" id="cd02440">
    <property type="entry name" value="AdoMet_MTases"/>
    <property type="match status" value="1"/>
</dbReference>
<dbReference type="Gene3D" id="3.40.50.150">
    <property type="entry name" value="Vaccinia Virus protein VP39"/>
    <property type="match status" value="2"/>
</dbReference>
<dbReference type="HAMAP" id="MF_01862">
    <property type="entry name" value="16SrRNA_methyltr_C"/>
    <property type="match status" value="1"/>
</dbReference>
<dbReference type="InterPro" id="IPR002052">
    <property type="entry name" value="DNA_methylase_N6_adenine_CS"/>
</dbReference>
<dbReference type="InterPro" id="IPR013675">
    <property type="entry name" value="Mtase_sm_N"/>
</dbReference>
<dbReference type="InterPro" id="IPR023543">
    <property type="entry name" value="rRNA_ssu_MeTfrase_C"/>
</dbReference>
<dbReference type="InterPro" id="IPR046977">
    <property type="entry name" value="RsmC/RlmG"/>
</dbReference>
<dbReference type="InterPro" id="IPR029063">
    <property type="entry name" value="SAM-dependent_MTases_sf"/>
</dbReference>
<dbReference type="InterPro" id="IPR007848">
    <property type="entry name" value="Small_mtfrase_dom"/>
</dbReference>
<dbReference type="PANTHER" id="PTHR47816">
    <property type="entry name" value="RIBOSOMAL RNA SMALL SUBUNIT METHYLTRANSFERASE C"/>
    <property type="match status" value="1"/>
</dbReference>
<dbReference type="PANTHER" id="PTHR47816:SF4">
    <property type="entry name" value="RIBOSOMAL RNA SMALL SUBUNIT METHYLTRANSFERASE C"/>
    <property type="match status" value="1"/>
</dbReference>
<dbReference type="Pfam" id="PF05175">
    <property type="entry name" value="MTS"/>
    <property type="match status" value="1"/>
</dbReference>
<dbReference type="Pfam" id="PF08468">
    <property type="entry name" value="MTS_N"/>
    <property type="match status" value="1"/>
</dbReference>
<dbReference type="SUPFAM" id="SSF53335">
    <property type="entry name" value="S-adenosyl-L-methionine-dependent methyltransferases"/>
    <property type="match status" value="1"/>
</dbReference>
<protein>
    <recommendedName>
        <fullName evidence="1">Ribosomal RNA small subunit methyltransferase C</fullName>
        <ecNumber evidence="1">2.1.1.172</ecNumber>
    </recommendedName>
    <alternativeName>
        <fullName evidence="1">16S rRNA m2G1207 methyltransferase</fullName>
    </alternativeName>
    <alternativeName>
        <fullName evidence="1">rRNA (guanine-N(2)-)-methyltransferase RsmC</fullName>
    </alternativeName>
</protein>
<gene>
    <name evidence="1" type="primary">rsmC</name>
    <name type="ordered locus">IL0493</name>
</gene>
<proteinExistence type="inferred from homology"/>
<evidence type="ECO:0000255" key="1">
    <source>
        <dbReference type="HAMAP-Rule" id="MF_01862"/>
    </source>
</evidence>
<comment type="function">
    <text evidence="1">Specifically methylates the guanine in position 1207 of 16S rRNA in the 30S particle.</text>
</comment>
<comment type="catalytic activity">
    <reaction evidence="1">
        <text>guanosine(1207) in 16S rRNA + S-adenosyl-L-methionine = N(2)-methylguanosine(1207) in 16S rRNA + S-adenosyl-L-homocysteine + H(+)</text>
        <dbReference type="Rhea" id="RHEA:42736"/>
        <dbReference type="Rhea" id="RHEA-COMP:10213"/>
        <dbReference type="Rhea" id="RHEA-COMP:10214"/>
        <dbReference type="ChEBI" id="CHEBI:15378"/>
        <dbReference type="ChEBI" id="CHEBI:57856"/>
        <dbReference type="ChEBI" id="CHEBI:59789"/>
        <dbReference type="ChEBI" id="CHEBI:74269"/>
        <dbReference type="ChEBI" id="CHEBI:74481"/>
        <dbReference type="EC" id="2.1.1.172"/>
    </reaction>
</comment>
<comment type="subunit">
    <text evidence="1">Monomer.</text>
</comment>
<comment type="subcellular location">
    <subcellularLocation>
        <location evidence="1">Cytoplasm</location>
    </subcellularLocation>
</comment>
<comment type="similarity">
    <text evidence="1">Belongs to the methyltransferase superfamily. RsmC family.</text>
</comment>
<sequence>MSAAILSMLGRQSAQPWANGSLLVIHPGGGELSALPNASAWSFHAGHAAYWKAAGRPVFCQIQPPNLSHYDGVLFLVAKEKELNQYLLEQLASLPTGTPVWFAGEKRSGIQPLMKHLPAWLQPPQKLASANHCLLFASERNEQVHQSASIEDYAKNITYELNQQQESFVTLPGVFSREHIDPATLLLLQHIKDLPKGRGMDFACGAGVIAKQLASVATELMACDVSPIAIAASEITLANEPVKTELRLADGIPDNAGQFDFIVSNPPFHTGQRTDYEIAREFISNARQHLNKQGVFRVVANRFLPWPEVIESVFGNCSVIADDGRYRVYHATCR</sequence>
<accession>Q5R049</accession>
<feature type="chain" id="PRO_0000369722" description="Ribosomal RNA small subunit methyltransferase C">
    <location>
        <begin position="1"/>
        <end position="334"/>
    </location>
</feature>
<keyword id="KW-0963">Cytoplasm</keyword>
<keyword id="KW-0489">Methyltransferase</keyword>
<keyword id="KW-1185">Reference proteome</keyword>
<keyword id="KW-0698">rRNA processing</keyword>
<keyword id="KW-0949">S-adenosyl-L-methionine</keyword>
<keyword id="KW-0808">Transferase</keyword>
<organism>
    <name type="scientific">Idiomarina loihiensis (strain ATCC BAA-735 / DSM 15497 / L2-TR)</name>
    <dbReference type="NCBI Taxonomy" id="283942"/>
    <lineage>
        <taxon>Bacteria</taxon>
        <taxon>Pseudomonadati</taxon>
        <taxon>Pseudomonadota</taxon>
        <taxon>Gammaproteobacteria</taxon>
        <taxon>Alteromonadales</taxon>
        <taxon>Idiomarinaceae</taxon>
        <taxon>Idiomarina</taxon>
    </lineage>
</organism>
<name>RSMC_IDILO</name>